<protein>
    <recommendedName>
        <fullName evidence="14">Neutral amino acid transporter A</fullName>
    </recommendedName>
    <alternativeName>
        <fullName evidence="13">Alanine/serine/cysteine/threonine transporter 1</fullName>
        <shortName evidence="13">ASCT-1</shortName>
    </alternativeName>
    <alternativeName>
        <fullName>Solute carrier family 1 member 4</fullName>
    </alternativeName>
</protein>
<reference key="1">
    <citation type="journal article" date="1993" name="J. Biol. Chem.">
        <title>Cloning and expression of a human neutral amino acid transporter with structural similarity to the glutamate transporter gene family.</title>
        <authorList>
            <person name="Arriza J.L."/>
            <person name="Kavanaugh M.P."/>
            <person name="Fairman W.A."/>
            <person name="Wu Y.-N."/>
            <person name="Murdoch G.H."/>
            <person name="North R.A."/>
            <person name="Amara S.G."/>
        </authorList>
    </citation>
    <scope>NUCLEOTIDE SEQUENCE [MRNA] (ISOFORM 1)</scope>
    <scope>FUNCTION</scope>
    <scope>TRANSPORTER ACTIVITY</scope>
    <scope>SUBCELLULAR LOCATION</scope>
    <source>
        <tissue>Brain cortex</tissue>
    </source>
</reference>
<reference key="2">
    <citation type="journal article" date="1993" name="J. Biol. Chem.">
        <title>Cloning and expression of a novel Na(+)-dependent neutral amino acid transporter structurally related to mammalian Na+/glutamate cotransporters.</title>
        <authorList>
            <person name="Shafqat S."/>
            <person name="Tamarappoo B.K."/>
            <person name="Kilberg M.S."/>
            <person name="Puranam R.S."/>
            <person name="McNamara J.O."/>
            <person name="Guadano-Ferraz A."/>
            <person name="Fremeau R.T. Jr."/>
        </authorList>
    </citation>
    <scope>NUCLEOTIDE SEQUENCE [MRNA] (ISOFORM 1)</scope>
    <scope>FUNCTION</scope>
    <scope>TRANSPORTER ACTIVITY</scope>
    <source>
        <tissue>Hippocampus</tissue>
    </source>
</reference>
<reference key="3">
    <citation type="journal article" date="1994" name="Genomics">
        <title>Human neutral amino acid transporter ASCT1: structure of the gene (SLC1A4) and localization to chromosome 2p13-p15.</title>
        <authorList>
            <person name="Hofmann K."/>
            <person name="Dueker M."/>
            <person name="Fink T."/>
            <person name="Lichter P."/>
            <person name="Stoffel W."/>
        </authorList>
    </citation>
    <scope>NUCLEOTIDE SEQUENCE [GENOMIC DNA]</scope>
    <source>
        <tissue>Placenta</tissue>
    </source>
</reference>
<reference key="4">
    <citation type="journal article" date="2004" name="Nat. Genet.">
        <title>Complete sequencing and characterization of 21,243 full-length human cDNAs.</title>
        <authorList>
            <person name="Ota T."/>
            <person name="Suzuki Y."/>
            <person name="Nishikawa T."/>
            <person name="Otsuki T."/>
            <person name="Sugiyama T."/>
            <person name="Irie R."/>
            <person name="Wakamatsu A."/>
            <person name="Hayashi K."/>
            <person name="Sato H."/>
            <person name="Nagai K."/>
            <person name="Kimura K."/>
            <person name="Makita H."/>
            <person name="Sekine M."/>
            <person name="Obayashi M."/>
            <person name="Nishi T."/>
            <person name="Shibahara T."/>
            <person name="Tanaka T."/>
            <person name="Ishii S."/>
            <person name="Yamamoto J."/>
            <person name="Saito K."/>
            <person name="Kawai Y."/>
            <person name="Isono Y."/>
            <person name="Nakamura Y."/>
            <person name="Nagahari K."/>
            <person name="Murakami K."/>
            <person name="Yasuda T."/>
            <person name="Iwayanagi T."/>
            <person name="Wagatsuma M."/>
            <person name="Shiratori A."/>
            <person name="Sudo H."/>
            <person name="Hosoiri T."/>
            <person name="Kaku Y."/>
            <person name="Kodaira H."/>
            <person name="Kondo H."/>
            <person name="Sugawara M."/>
            <person name="Takahashi M."/>
            <person name="Kanda K."/>
            <person name="Yokoi T."/>
            <person name="Furuya T."/>
            <person name="Kikkawa E."/>
            <person name="Omura Y."/>
            <person name="Abe K."/>
            <person name="Kamihara K."/>
            <person name="Katsuta N."/>
            <person name="Sato K."/>
            <person name="Tanikawa M."/>
            <person name="Yamazaki M."/>
            <person name="Ninomiya K."/>
            <person name="Ishibashi T."/>
            <person name="Yamashita H."/>
            <person name="Murakawa K."/>
            <person name="Fujimori K."/>
            <person name="Tanai H."/>
            <person name="Kimata M."/>
            <person name="Watanabe M."/>
            <person name="Hiraoka S."/>
            <person name="Chiba Y."/>
            <person name="Ishida S."/>
            <person name="Ono Y."/>
            <person name="Takiguchi S."/>
            <person name="Watanabe S."/>
            <person name="Yosida M."/>
            <person name="Hotuta T."/>
            <person name="Kusano J."/>
            <person name="Kanehori K."/>
            <person name="Takahashi-Fujii A."/>
            <person name="Hara H."/>
            <person name="Tanase T.-O."/>
            <person name="Nomura Y."/>
            <person name="Togiya S."/>
            <person name="Komai F."/>
            <person name="Hara R."/>
            <person name="Takeuchi K."/>
            <person name="Arita M."/>
            <person name="Imose N."/>
            <person name="Musashino K."/>
            <person name="Yuuki H."/>
            <person name="Oshima A."/>
            <person name="Sasaki N."/>
            <person name="Aotsuka S."/>
            <person name="Yoshikawa Y."/>
            <person name="Matsunawa H."/>
            <person name="Ichihara T."/>
            <person name="Shiohata N."/>
            <person name="Sano S."/>
            <person name="Moriya S."/>
            <person name="Momiyama H."/>
            <person name="Satoh N."/>
            <person name="Takami S."/>
            <person name="Terashima Y."/>
            <person name="Suzuki O."/>
            <person name="Nakagawa S."/>
            <person name="Senoh A."/>
            <person name="Mizoguchi H."/>
            <person name="Goto Y."/>
            <person name="Shimizu F."/>
            <person name="Wakebe H."/>
            <person name="Hishigaki H."/>
            <person name="Watanabe T."/>
            <person name="Sugiyama A."/>
            <person name="Takemoto M."/>
            <person name="Kawakami B."/>
            <person name="Yamazaki M."/>
            <person name="Watanabe K."/>
            <person name="Kumagai A."/>
            <person name="Itakura S."/>
            <person name="Fukuzumi Y."/>
            <person name="Fujimori Y."/>
            <person name="Komiyama M."/>
            <person name="Tashiro H."/>
            <person name="Tanigami A."/>
            <person name="Fujiwara T."/>
            <person name="Ono T."/>
            <person name="Yamada K."/>
            <person name="Fujii Y."/>
            <person name="Ozaki K."/>
            <person name="Hirao M."/>
            <person name="Ohmori Y."/>
            <person name="Kawabata A."/>
            <person name="Hikiji T."/>
            <person name="Kobatake N."/>
            <person name="Inagaki H."/>
            <person name="Ikema Y."/>
            <person name="Okamoto S."/>
            <person name="Okitani R."/>
            <person name="Kawakami T."/>
            <person name="Noguchi S."/>
            <person name="Itoh T."/>
            <person name="Shigeta K."/>
            <person name="Senba T."/>
            <person name="Matsumura K."/>
            <person name="Nakajima Y."/>
            <person name="Mizuno T."/>
            <person name="Morinaga M."/>
            <person name="Sasaki M."/>
            <person name="Togashi T."/>
            <person name="Oyama M."/>
            <person name="Hata H."/>
            <person name="Watanabe M."/>
            <person name="Komatsu T."/>
            <person name="Mizushima-Sugano J."/>
            <person name="Satoh T."/>
            <person name="Shirai Y."/>
            <person name="Takahashi Y."/>
            <person name="Nakagawa K."/>
            <person name="Okumura K."/>
            <person name="Nagase T."/>
            <person name="Nomura N."/>
            <person name="Kikuchi H."/>
            <person name="Masuho Y."/>
            <person name="Yamashita R."/>
            <person name="Nakai K."/>
            <person name="Yada T."/>
            <person name="Nakamura Y."/>
            <person name="Ohara O."/>
            <person name="Isogai T."/>
            <person name="Sugano S."/>
        </authorList>
    </citation>
    <scope>NUCLEOTIDE SEQUENCE [LARGE SCALE MRNA] (ISOFORM 2)</scope>
    <source>
        <tissue>Hippocampus</tissue>
    </source>
</reference>
<reference key="5">
    <citation type="journal article" date="2005" name="Nature">
        <title>Generation and annotation of the DNA sequences of human chromosomes 2 and 4.</title>
        <authorList>
            <person name="Hillier L.W."/>
            <person name="Graves T.A."/>
            <person name="Fulton R.S."/>
            <person name="Fulton L.A."/>
            <person name="Pepin K.H."/>
            <person name="Minx P."/>
            <person name="Wagner-McPherson C."/>
            <person name="Layman D."/>
            <person name="Wylie K."/>
            <person name="Sekhon M."/>
            <person name="Becker M.C."/>
            <person name="Fewell G.A."/>
            <person name="Delehaunty K.D."/>
            <person name="Miner T.L."/>
            <person name="Nash W.E."/>
            <person name="Kremitzki C."/>
            <person name="Oddy L."/>
            <person name="Du H."/>
            <person name="Sun H."/>
            <person name="Bradshaw-Cordum H."/>
            <person name="Ali J."/>
            <person name="Carter J."/>
            <person name="Cordes M."/>
            <person name="Harris A."/>
            <person name="Isak A."/>
            <person name="van Brunt A."/>
            <person name="Nguyen C."/>
            <person name="Du F."/>
            <person name="Courtney L."/>
            <person name="Kalicki J."/>
            <person name="Ozersky P."/>
            <person name="Abbott S."/>
            <person name="Armstrong J."/>
            <person name="Belter E.A."/>
            <person name="Caruso L."/>
            <person name="Cedroni M."/>
            <person name="Cotton M."/>
            <person name="Davidson T."/>
            <person name="Desai A."/>
            <person name="Elliott G."/>
            <person name="Erb T."/>
            <person name="Fronick C."/>
            <person name="Gaige T."/>
            <person name="Haakenson W."/>
            <person name="Haglund K."/>
            <person name="Holmes A."/>
            <person name="Harkins R."/>
            <person name="Kim K."/>
            <person name="Kruchowski S.S."/>
            <person name="Strong C.M."/>
            <person name="Grewal N."/>
            <person name="Goyea E."/>
            <person name="Hou S."/>
            <person name="Levy A."/>
            <person name="Martinka S."/>
            <person name="Mead K."/>
            <person name="McLellan M.D."/>
            <person name="Meyer R."/>
            <person name="Randall-Maher J."/>
            <person name="Tomlinson C."/>
            <person name="Dauphin-Kohlberg S."/>
            <person name="Kozlowicz-Reilly A."/>
            <person name="Shah N."/>
            <person name="Swearengen-Shahid S."/>
            <person name="Snider J."/>
            <person name="Strong J.T."/>
            <person name="Thompson J."/>
            <person name="Yoakum M."/>
            <person name="Leonard S."/>
            <person name="Pearman C."/>
            <person name="Trani L."/>
            <person name="Radionenko M."/>
            <person name="Waligorski J.E."/>
            <person name="Wang C."/>
            <person name="Rock S.M."/>
            <person name="Tin-Wollam A.-M."/>
            <person name="Maupin R."/>
            <person name="Latreille P."/>
            <person name="Wendl M.C."/>
            <person name="Yang S.-P."/>
            <person name="Pohl C."/>
            <person name="Wallis J.W."/>
            <person name="Spieth J."/>
            <person name="Bieri T.A."/>
            <person name="Berkowicz N."/>
            <person name="Nelson J.O."/>
            <person name="Osborne J."/>
            <person name="Ding L."/>
            <person name="Meyer R."/>
            <person name="Sabo A."/>
            <person name="Shotland Y."/>
            <person name="Sinha P."/>
            <person name="Wohldmann P.E."/>
            <person name="Cook L.L."/>
            <person name="Hickenbotham M.T."/>
            <person name="Eldred J."/>
            <person name="Williams D."/>
            <person name="Jones T.A."/>
            <person name="She X."/>
            <person name="Ciccarelli F.D."/>
            <person name="Izaurralde E."/>
            <person name="Taylor J."/>
            <person name="Schmutz J."/>
            <person name="Myers R.M."/>
            <person name="Cox D.R."/>
            <person name="Huang X."/>
            <person name="McPherson J.D."/>
            <person name="Mardis E.R."/>
            <person name="Clifton S.W."/>
            <person name="Warren W.C."/>
            <person name="Chinwalla A.T."/>
            <person name="Eddy S.R."/>
            <person name="Marra M.A."/>
            <person name="Ovcharenko I."/>
            <person name="Furey T.S."/>
            <person name="Miller W."/>
            <person name="Eichler E.E."/>
            <person name="Bork P."/>
            <person name="Suyama M."/>
            <person name="Torrents D."/>
            <person name="Waterston R.H."/>
            <person name="Wilson R.K."/>
        </authorList>
    </citation>
    <scope>NUCLEOTIDE SEQUENCE [LARGE SCALE GENOMIC DNA]</scope>
</reference>
<reference key="6">
    <citation type="submission" date="2005-09" db="EMBL/GenBank/DDBJ databases">
        <authorList>
            <person name="Mural R.J."/>
            <person name="Istrail S."/>
            <person name="Sutton G.G."/>
            <person name="Florea L."/>
            <person name="Halpern A.L."/>
            <person name="Mobarry C.M."/>
            <person name="Lippert R."/>
            <person name="Walenz B."/>
            <person name="Shatkay H."/>
            <person name="Dew I."/>
            <person name="Miller J.R."/>
            <person name="Flanigan M.J."/>
            <person name="Edwards N.J."/>
            <person name="Bolanos R."/>
            <person name="Fasulo D."/>
            <person name="Halldorsson B.V."/>
            <person name="Hannenhalli S."/>
            <person name="Turner R."/>
            <person name="Yooseph S."/>
            <person name="Lu F."/>
            <person name="Nusskern D.R."/>
            <person name="Shue B.C."/>
            <person name="Zheng X.H."/>
            <person name="Zhong F."/>
            <person name="Delcher A.L."/>
            <person name="Huson D.H."/>
            <person name="Kravitz S.A."/>
            <person name="Mouchard L."/>
            <person name="Reinert K."/>
            <person name="Remington K.A."/>
            <person name="Clark A.G."/>
            <person name="Waterman M.S."/>
            <person name="Eichler E.E."/>
            <person name="Adams M.D."/>
            <person name="Hunkapiller M.W."/>
            <person name="Myers E.W."/>
            <person name="Venter J.C."/>
        </authorList>
    </citation>
    <scope>NUCLEOTIDE SEQUENCE [LARGE SCALE GENOMIC DNA]</scope>
</reference>
<reference key="7">
    <citation type="journal article" date="2004" name="Genome Res.">
        <title>The status, quality, and expansion of the NIH full-length cDNA project: the Mammalian Gene Collection (MGC).</title>
        <authorList>
            <consortium name="The MGC Project Team"/>
        </authorList>
    </citation>
    <scope>NUCLEOTIDE SEQUENCE [LARGE SCALE MRNA] (ISOFORM 1)</scope>
    <source>
        <tissue>Lymph</tissue>
        <tissue>PNS</tissue>
    </source>
</reference>
<reference key="8">
    <citation type="journal article" date="2003" name="J. Membr. Biol.">
        <title>Transport of proline and hydroxyproline by the neutral amino-acid exchanger ASCT1.</title>
        <authorList>
            <person name="Pinilla-Tenas J."/>
            <person name="Barber A."/>
            <person name="Lostao M.P."/>
        </authorList>
    </citation>
    <scope>FUNCTION</scope>
    <scope>TRANSPORTER ACTIVITY</scope>
</reference>
<reference key="9">
    <citation type="journal article" date="2006" name="J. Proteome Res.">
        <title>Proteomic and bioinformatic characterization of the biogenesis and function of melanosomes.</title>
        <authorList>
            <person name="Chi A."/>
            <person name="Valencia J.C."/>
            <person name="Hu Z.-Z."/>
            <person name="Watabe H."/>
            <person name="Yamaguchi H."/>
            <person name="Mangini N.J."/>
            <person name="Huang H."/>
            <person name="Canfield V.A."/>
            <person name="Cheng K.C."/>
            <person name="Yang F."/>
            <person name="Abe R."/>
            <person name="Yamagishi S."/>
            <person name="Shabanowitz J."/>
            <person name="Hearing V.J."/>
            <person name="Wu C."/>
            <person name="Appella E."/>
            <person name="Hunt D.F."/>
        </authorList>
    </citation>
    <scope>SUBCELLULAR LOCATION [LARGE SCALE ANALYSIS]</scope>
    <source>
        <tissue>Melanoma</tissue>
    </source>
</reference>
<reference key="10">
    <citation type="journal article" date="2008" name="Proc. Natl. Acad. Sci. U.S.A.">
        <title>A quantitative atlas of mitotic phosphorylation.</title>
        <authorList>
            <person name="Dephoure N."/>
            <person name="Zhou C."/>
            <person name="Villen J."/>
            <person name="Beausoleil S.A."/>
            <person name="Bakalarski C.E."/>
            <person name="Elledge S.J."/>
            <person name="Gygi S.P."/>
        </authorList>
    </citation>
    <scope>PHOSPHORYLATION [LARGE SCALE ANALYSIS] AT SER-507</scope>
    <scope>IDENTIFICATION BY MASS SPECTROMETRY [LARGE SCALE ANALYSIS]</scope>
    <source>
        <tissue>Cervix carcinoma</tissue>
    </source>
</reference>
<reference key="11">
    <citation type="journal article" date="2009" name="Nat. Biotechnol.">
        <title>Mass-spectrometric identification and relative quantification of N-linked cell surface glycoproteins.</title>
        <authorList>
            <person name="Wollscheid B."/>
            <person name="Bausch-Fluck D."/>
            <person name="Henderson C."/>
            <person name="O'Brien R."/>
            <person name="Bibel M."/>
            <person name="Schiess R."/>
            <person name="Aebersold R."/>
            <person name="Watts J.D."/>
        </authorList>
    </citation>
    <scope>GLYCOSYLATION [LARGE SCALE ANALYSIS] AT ASN-201 AND ASN-206</scope>
    <source>
        <tissue>Leukemic T-cell</tissue>
    </source>
</reference>
<reference key="12">
    <citation type="journal article" date="2009" name="Sci. Signal.">
        <title>Quantitative phosphoproteomic analysis of T cell receptor signaling reveals system-wide modulation of protein-protein interactions.</title>
        <authorList>
            <person name="Mayya V."/>
            <person name="Lundgren D.H."/>
            <person name="Hwang S.-I."/>
            <person name="Rezaul K."/>
            <person name="Wu L."/>
            <person name="Eng J.K."/>
            <person name="Rodionov V."/>
            <person name="Han D.K."/>
        </authorList>
    </citation>
    <scope>IDENTIFICATION BY MASS SPECTROMETRY [LARGE SCALE ANALYSIS]</scope>
    <source>
        <tissue>Leukemic T-cell</tissue>
    </source>
</reference>
<reference key="13">
    <citation type="journal article" date="2010" name="Sci. Signal.">
        <title>Quantitative phosphoproteomics reveals widespread full phosphorylation site occupancy during mitosis.</title>
        <authorList>
            <person name="Olsen J.V."/>
            <person name="Vermeulen M."/>
            <person name="Santamaria A."/>
            <person name="Kumar C."/>
            <person name="Miller M.L."/>
            <person name="Jensen L.J."/>
            <person name="Gnad F."/>
            <person name="Cox J."/>
            <person name="Jensen T.S."/>
            <person name="Nigg E.A."/>
            <person name="Brunak S."/>
            <person name="Mann M."/>
        </authorList>
    </citation>
    <scope>IDENTIFICATION BY MASS SPECTROMETRY [LARGE SCALE ANALYSIS]</scope>
    <source>
        <tissue>Cervix carcinoma</tissue>
    </source>
</reference>
<reference key="14">
    <citation type="journal article" date="2011" name="BMC Syst. Biol.">
        <title>Initial characterization of the human central proteome.</title>
        <authorList>
            <person name="Burkard T.R."/>
            <person name="Planyavsky M."/>
            <person name="Kaupe I."/>
            <person name="Breitwieser F.P."/>
            <person name="Buerckstuemmer T."/>
            <person name="Bennett K.L."/>
            <person name="Superti-Furga G."/>
            <person name="Colinge J."/>
        </authorList>
    </citation>
    <scope>IDENTIFICATION BY MASS SPECTROMETRY [LARGE SCALE ANALYSIS]</scope>
</reference>
<reference key="15">
    <citation type="journal article" date="2012" name="Proc. Natl. Acad. Sci. U.S.A.">
        <title>N-terminal acetylome analyses and functional insights of the N-terminal acetyltransferase NatB.</title>
        <authorList>
            <person name="Van Damme P."/>
            <person name="Lasa M."/>
            <person name="Polevoda B."/>
            <person name="Gazquez C."/>
            <person name="Elosegui-Artola A."/>
            <person name="Kim D.S."/>
            <person name="De Juan-Pardo E."/>
            <person name="Demeyer K."/>
            <person name="Hole K."/>
            <person name="Larrea E."/>
            <person name="Timmerman E."/>
            <person name="Prieto J."/>
            <person name="Arnesen T."/>
            <person name="Sherman F."/>
            <person name="Gevaert K."/>
            <person name="Aldabe R."/>
        </authorList>
    </citation>
    <scope>ACETYLATION [LARGE SCALE ANALYSIS] AT MET-1</scope>
    <scope>IDENTIFICATION BY MASS SPECTROMETRY [LARGE SCALE ANALYSIS]</scope>
</reference>
<reference key="16">
    <citation type="journal article" date="2013" name="J. Proteome Res.">
        <title>Toward a comprehensive characterization of a human cancer cell phosphoproteome.</title>
        <authorList>
            <person name="Zhou H."/>
            <person name="Di Palma S."/>
            <person name="Preisinger C."/>
            <person name="Peng M."/>
            <person name="Polat A.N."/>
            <person name="Heck A.J."/>
            <person name="Mohammed S."/>
        </authorList>
    </citation>
    <scope>IDENTIFICATION BY MASS SPECTROMETRY [LARGE SCALE ANALYSIS]</scope>
    <source>
        <tissue>Cervix carcinoma</tissue>
        <tissue>Erythroleukemia</tissue>
    </source>
</reference>
<reference key="17">
    <citation type="journal article" date="2015" name="Clin. Genet.">
        <title>A homozygous mutation in SLC1A4 in siblings with severe intellectual disability and microcephaly.</title>
        <authorList>
            <person name="Srour M."/>
            <person name="Hamdan F.F."/>
            <person name="Gan-Or Z."/>
            <person name="Labuda D."/>
            <person name="Nassif C."/>
            <person name="Oskoui M."/>
            <person name="Gana-Weisz M."/>
            <person name="Orr-Urtreger A."/>
            <person name="Rouleau G.A."/>
            <person name="Michaud J.L."/>
        </authorList>
    </citation>
    <scope>INVOLVEMENT IN SPATCCM</scope>
    <scope>VARIANT SPATCCM LYS-256</scope>
</reference>
<reference key="18">
    <citation type="journal article" date="2015" name="Clin. Genet.">
        <title>SLC1A4 mutations cause a novel disorder of intellectual disability, progressive microcephaly, spasticity and thin corpus callosum.</title>
        <authorList>
            <person name="Heimer G."/>
            <person name="Marek-Yagel D."/>
            <person name="Eyal E."/>
            <person name="Barel O."/>
            <person name="Oz Levi D."/>
            <person name="Hoffmann C."/>
            <person name="Ruzzo E.K."/>
            <person name="Ganelin-Cohen E."/>
            <person name="Lancet D."/>
            <person name="Pras E."/>
            <person name="Rechavi G."/>
            <person name="Nissenkorn A."/>
            <person name="Anikster Y."/>
            <person name="Goldstein D.B."/>
            <person name="Ben Zeev B."/>
        </authorList>
    </citation>
    <scope>INVOLVEMENT IN SPATCCM</scope>
    <scope>VARIANT SPATCCM LYS-256</scope>
</reference>
<reference key="19">
    <citation type="journal article" date="2015" name="J. Med. Genet.">
        <title>Mutations in SLC1A4, encoding the brain serine transporter, are associated with developmental delay, microcephaly and hypomyelination.</title>
        <authorList>
            <person name="Damseh N."/>
            <person name="Simonin A."/>
            <person name="Jalas C."/>
            <person name="Picoraro J.A."/>
            <person name="Shaag A."/>
            <person name="Cho M.T."/>
            <person name="Yaacov B."/>
            <person name="Neidich J."/>
            <person name="Al-Ashhab M."/>
            <person name="Juusola J."/>
            <person name="Bale S."/>
            <person name="Telegrafi A."/>
            <person name="Retterer K."/>
            <person name="Pappas J.G."/>
            <person name="Moran E."/>
            <person name="Cappell J."/>
            <person name="Anyane Yeboa K."/>
            <person name="Abu-Libdeh B."/>
            <person name="Hediger M.A."/>
            <person name="Chung W.K."/>
            <person name="Elpeleg O."/>
            <person name="Edvardson S."/>
        </authorList>
    </citation>
    <scope>FUNCTION</scope>
    <scope>INVOLVEMENT IN SPATCCM</scope>
    <scope>VARIANTS SPATCCM LYS-256 AND TRP-457</scope>
    <scope>CHARACTERIZATION OF VARIANTS SPATCCM LYS-256 AND TRP-457</scope>
</reference>
<reference key="20">
    <citation type="journal article" date="2015" name="Proteomics">
        <title>N-terminome analysis of the human mitochondrial proteome.</title>
        <authorList>
            <person name="Vaca Jacome A.S."/>
            <person name="Rabilloud T."/>
            <person name="Schaeffer-Reiss C."/>
            <person name="Rompais M."/>
            <person name="Ayoub D."/>
            <person name="Lane L."/>
            <person name="Bairoch A."/>
            <person name="Van Dorsselaer A."/>
            <person name="Carapito C."/>
        </authorList>
    </citation>
    <scope>IDENTIFICATION BY MASS SPECTROMETRY [LARGE SCALE ANALYSIS]</scope>
</reference>
<sequence>MEKSNETNGYLDSAQAGPAAGPGAPGTAAGRARRCAGFLRRQALVLLTVSGVLAGAGLGAALRGLSLSRTQVTYLAFPGEMLLRMLRMIILPLVVCSLVSGAASLDASCLGRLGGIAVAYFGLTTLSASALAVALAFIIKPGSGAQTLQSSDLGLEDSGPPPVPKETVDSFLDLARNLFPSNLVVAAFRTYATDYKVVTQNSSSGNVTHEKIPIGTEIEGMNILGLVLFALVLGVALKKLGSEGEDLIRFFNSLNEATMVLVSWIMWYVPVGIMFLVGSKIVEMKDIIVLVTSLGKYIFASILGHVIHGGIVLPLIYFVFTRKNPFRFLLGLLAPFATAFATCSSSATLPSMMKCIEENNGVDKRISRFILPIGATVNMDGAAIFQCVAAVFIAQLNNVELNAGQIFTILVTATASSVGAAGVPAGGVLTIAIILEAIGLPTHDLPLILAVDWIVDRTTTVVNVEGDALGAGILHHLNQKATKKGEQELAEVKVEAIPNCKSEEETSPLVTHQNPAGPVASAPELESKESVL</sequence>
<accession>P43007</accession>
<accession>B7Z3C0</accession>
<accession>D6W5F0</accession>
<evidence type="ECO:0000250" key="1">
    <source>
        <dbReference type="UniProtKB" id="O35874"/>
    </source>
</evidence>
<evidence type="ECO:0000255" key="2"/>
<evidence type="ECO:0000256" key="3">
    <source>
        <dbReference type="SAM" id="MobiDB-lite"/>
    </source>
</evidence>
<evidence type="ECO:0000269" key="4">
    <source>
    </source>
</evidence>
<evidence type="ECO:0000269" key="5">
    <source>
    </source>
</evidence>
<evidence type="ECO:0000269" key="6">
    <source>
    </source>
</evidence>
<evidence type="ECO:0000269" key="7">
    <source>
    </source>
</evidence>
<evidence type="ECO:0000269" key="8">
    <source>
    </source>
</evidence>
<evidence type="ECO:0000269" key="9">
    <source>
    </source>
</evidence>
<evidence type="ECO:0000269" key="10">
    <source>
    </source>
</evidence>
<evidence type="ECO:0000269" key="11">
    <source>
    </source>
</evidence>
<evidence type="ECO:0000303" key="12">
    <source>
    </source>
</evidence>
<evidence type="ECO:0000303" key="13">
    <source>
    </source>
</evidence>
<evidence type="ECO:0000303" key="14">
    <source>
    </source>
</evidence>
<evidence type="ECO:0000303" key="15">
    <source>
    </source>
</evidence>
<evidence type="ECO:0000305" key="16"/>
<evidence type="ECO:0000312" key="17">
    <source>
        <dbReference type="HGNC" id="HGNC:10942"/>
    </source>
</evidence>
<evidence type="ECO:0007744" key="18">
    <source>
    </source>
</evidence>
<evidence type="ECO:0007744" key="19">
    <source>
    </source>
</evidence>
<comment type="function">
    <text evidence="4 8 10 11">Sodium-dependent neutral amino-acid transporter that mediates transport of alanine, serine, cysteine, proline, hydroxyproline and threonine.</text>
</comment>
<comment type="catalytic activity">
    <reaction evidence="11">
        <text>L-threonine(in) + Na(+)(in) = L-threonine(out) + Na(+)(out)</text>
        <dbReference type="Rhea" id="RHEA:69999"/>
        <dbReference type="ChEBI" id="CHEBI:29101"/>
        <dbReference type="ChEBI" id="CHEBI:57926"/>
    </reaction>
</comment>
<comment type="catalytic activity">
    <reaction evidence="10 11">
        <text>L-serine(in) + Na(+)(in) = L-serine(out) + Na(+)(out)</text>
        <dbReference type="Rhea" id="RHEA:29575"/>
        <dbReference type="ChEBI" id="CHEBI:29101"/>
        <dbReference type="ChEBI" id="CHEBI:33384"/>
    </reaction>
</comment>
<comment type="catalytic activity">
    <reaction evidence="10">
        <text>L-cysteine(in) + Na(+)(in) = L-cysteine(out) + Na(+)(out)</text>
        <dbReference type="Rhea" id="RHEA:68232"/>
        <dbReference type="ChEBI" id="CHEBI:29101"/>
        <dbReference type="ChEBI" id="CHEBI:35235"/>
    </reaction>
</comment>
<comment type="catalytic activity">
    <reaction evidence="4 10 11">
        <text>L-alanine(in) + Na(+)(in) = L-alanine(out) + Na(+)(out)</text>
        <dbReference type="Rhea" id="RHEA:29283"/>
        <dbReference type="ChEBI" id="CHEBI:29101"/>
        <dbReference type="ChEBI" id="CHEBI:57972"/>
    </reaction>
</comment>
<comment type="catalytic activity">
    <reaction evidence="4">
        <text>L-proline(in) + Na(+)(in) = L-proline(out) + Na(+)(out)</text>
        <dbReference type="Rhea" id="RHEA:28967"/>
        <dbReference type="ChEBI" id="CHEBI:29101"/>
        <dbReference type="ChEBI" id="CHEBI:60039"/>
    </reaction>
</comment>
<comment type="catalytic activity">
    <reaction evidence="4">
        <text>4-hydroxy-L-proline(in) + Na(+)(in) = 4-hydroxy-L-proline(out) + Na(+)(out)</text>
        <dbReference type="Rhea" id="RHEA:70023"/>
        <dbReference type="ChEBI" id="CHEBI:29101"/>
        <dbReference type="ChEBI" id="CHEBI:58419"/>
    </reaction>
</comment>
<comment type="subcellular location">
    <subcellularLocation>
        <location evidence="5">Membrane</location>
        <topology evidence="2">Multi-pass membrane protein</topology>
    </subcellularLocation>
    <subcellularLocation>
        <location evidence="5">Melanosome</location>
    </subcellularLocation>
    <text evidence="5">Identified by mass spectrometry in melanosome fractions from stage I to stage IV.</text>
</comment>
<comment type="alternative products">
    <event type="alternative splicing"/>
    <isoform>
        <id>P43007-1</id>
        <name>1</name>
        <sequence type="displayed"/>
    </isoform>
    <isoform>
        <id>P43007-2</id>
        <name>2</name>
        <sequence type="described" ref="VSP_042880 VSP_042881"/>
    </isoform>
</comment>
<comment type="tissue specificity">
    <text evidence="11">Expressed mostly in brain, muscle, and pancreas but detected in all tissues examined.</text>
</comment>
<comment type="disease" evidence="7 8 9">
    <disease id="DI-04580">
        <name>Spastic tetraplegia, thin corpus callosum, and progressive microcephaly</name>
        <acronym>SPATCCM</acronym>
        <description>A neurodevelopmental disorder characterized by thin corpus callosum, severe progressive microcephaly, severe intellectual disability, seizures, spasticity, and global developmental delay. Most patients are unable to achieve independent walking or speech.</description>
        <dbReference type="MIM" id="616657"/>
    </disease>
    <text>The disease is caused by variants affecting the gene represented in this entry.</text>
</comment>
<comment type="similarity">
    <text evidence="16">Belongs to the dicarboxylate/amino acid:cation symporter (DAACS) (TC 2.A.23) family. SLC1A4 subfamily.</text>
</comment>
<proteinExistence type="evidence at protein level"/>
<feature type="chain" id="PRO_0000202079" description="Neutral amino acid transporter A">
    <location>
        <begin position="1"/>
        <end position="532"/>
    </location>
</feature>
<feature type="topological domain" description="Cytoplasmic" evidence="2">
    <location>
        <begin position="1"/>
        <end position="41"/>
    </location>
</feature>
<feature type="transmembrane region" description="Helical" evidence="2">
    <location>
        <begin position="42"/>
        <end position="62"/>
    </location>
</feature>
<feature type="transmembrane region" description="Helical" evidence="2">
    <location>
        <begin position="88"/>
        <end position="108"/>
    </location>
</feature>
<feature type="transmembrane region" description="Helical" evidence="2">
    <location>
        <begin position="119"/>
        <end position="139"/>
    </location>
</feature>
<feature type="topological domain" description="Extracellular" evidence="2">
    <location>
        <begin position="140"/>
        <end position="216"/>
    </location>
</feature>
<feature type="transmembrane region" description="Helical" evidence="2">
    <location>
        <begin position="217"/>
        <end position="237"/>
    </location>
</feature>
<feature type="transmembrane region" description="Helical" evidence="2">
    <location>
        <begin position="257"/>
        <end position="277"/>
    </location>
</feature>
<feature type="transmembrane region" description="Helical" evidence="2">
    <location>
        <begin position="298"/>
        <end position="318"/>
    </location>
</feature>
<feature type="transmembrane region" description="Helical" evidence="2">
    <location>
        <begin position="328"/>
        <end position="348"/>
    </location>
</feature>
<feature type="transmembrane region" description="Helical" evidence="2">
    <location>
        <begin position="373"/>
        <end position="393"/>
    </location>
</feature>
<feature type="transmembrane region" description="Helical" evidence="2">
    <location>
        <begin position="418"/>
        <end position="438"/>
    </location>
</feature>
<feature type="region of interest" description="Disordered" evidence="3">
    <location>
        <begin position="1"/>
        <end position="25"/>
    </location>
</feature>
<feature type="region of interest" description="Disordered" evidence="3">
    <location>
        <begin position="500"/>
        <end position="532"/>
    </location>
</feature>
<feature type="compositionally biased region" description="Polar residues" evidence="3">
    <location>
        <begin position="1"/>
        <end position="10"/>
    </location>
</feature>
<feature type="compositionally biased region" description="Low complexity" evidence="3">
    <location>
        <begin position="14"/>
        <end position="25"/>
    </location>
</feature>
<feature type="modified residue" description="N-acetylmethionine" evidence="19">
    <location>
        <position position="1"/>
    </location>
</feature>
<feature type="modified residue" description="Phosphoserine" evidence="18">
    <location>
        <position position="507"/>
    </location>
</feature>
<feature type="modified residue" description="Phosphoserine" evidence="1">
    <location>
        <position position="527"/>
    </location>
</feature>
<feature type="modified residue" description="Phosphoserine" evidence="1">
    <location>
        <position position="530"/>
    </location>
</feature>
<feature type="glycosylation site" description="N-linked (GlcNAc...) asparagine" evidence="6">
    <location>
        <position position="201"/>
    </location>
</feature>
<feature type="glycosylation site" description="N-linked (GlcNAc...) asparagine" evidence="6">
    <location>
        <position position="206"/>
    </location>
</feature>
<feature type="splice variant" id="VSP_042880" description="In isoform 2." evidence="12">
    <location>
        <begin position="1"/>
        <end position="220"/>
    </location>
</feature>
<feature type="splice variant" id="VSP_042881" description="In isoform 2." evidence="12">
    <original>WYVPVGIMFLVGSKIVEMKDIIVLVTSLGKYIFASILGHVIHGGIVLPLIYFVFTRKNPFRFLLGLLAPFATAFATCSS</original>
    <variation>C</variation>
    <location>
        <begin position="267"/>
        <end position="345"/>
    </location>
</feature>
<feature type="sequence variant" id="VAR_011878" description="In dbSNP:rs1064512.">
    <original>G</original>
    <variation>R</variation>
    <location>
        <position position="37"/>
    </location>
</feature>
<feature type="sequence variant" id="VAR_075085" description="In SPATCCM; does not affect localization at the cell surface; decreased uptake of L-serine and L-alanine; Vmax is decreased by at least 50% for both substrates; 3-fold increase of affinity for L-serine; 2-fold increase of affinity for L-alanine; dbSNP:rs201278558." evidence="7 8 9">
    <original>E</original>
    <variation>K</variation>
    <location>
        <position position="256"/>
    </location>
</feature>
<feature type="sequence variant" id="VAR_011879" description="In dbSNP:rs759458.">
    <original>V</original>
    <variation>I</variation>
    <location>
        <position position="399"/>
    </location>
</feature>
<feature type="sequence variant" id="VAR_075086" description="In SPATCCM; does not affect localization at the cell surface; loss of uptake of L-serine and L-alanine; dbSNP:rs761533681." evidence="8">
    <original>R</original>
    <variation>W</variation>
    <location>
        <position position="457"/>
    </location>
</feature>
<feature type="sequence conflict" description="In Ref. 1; AAA02761." evidence="16" ref="1">
    <original>A</original>
    <variation>R</variation>
    <location>
        <position position="117"/>
    </location>
</feature>
<feature type="sequence conflict" description="In Ref. 2; AAA19438." evidence="16" ref="2">
    <original>S</original>
    <variation>T</variation>
    <location>
        <position position="127"/>
    </location>
</feature>
<name>SATT_HUMAN</name>
<organism>
    <name type="scientific">Homo sapiens</name>
    <name type="common">Human</name>
    <dbReference type="NCBI Taxonomy" id="9606"/>
    <lineage>
        <taxon>Eukaryota</taxon>
        <taxon>Metazoa</taxon>
        <taxon>Chordata</taxon>
        <taxon>Craniata</taxon>
        <taxon>Vertebrata</taxon>
        <taxon>Euteleostomi</taxon>
        <taxon>Mammalia</taxon>
        <taxon>Eutheria</taxon>
        <taxon>Euarchontoglires</taxon>
        <taxon>Primates</taxon>
        <taxon>Haplorrhini</taxon>
        <taxon>Catarrhini</taxon>
        <taxon>Hominidae</taxon>
        <taxon>Homo</taxon>
    </lineage>
</organism>
<dbReference type="EMBL" id="L14595">
    <property type="protein sequence ID" value="AAA02761.1"/>
    <property type="molecule type" value="mRNA"/>
</dbReference>
<dbReference type="EMBL" id="L19444">
    <property type="protein sequence ID" value="AAA19438.1"/>
    <property type="molecule type" value="mRNA"/>
</dbReference>
<dbReference type="EMBL" id="U05235">
    <property type="protein sequence ID" value="AAC51349.1"/>
    <property type="molecule type" value="Genomic_DNA"/>
</dbReference>
<dbReference type="EMBL" id="U05229">
    <property type="protein sequence ID" value="AAC51349.1"/>
    <property type="status" value="JOINED"/>
    <property type="molecule type" value="Genomic_DNA"/>
</dbReference>
<dbReference type="EMBL" id="U05230">
    <property type="protein sequence ID" value="AAC51349.1"/>
    <property type="status" value="JOINED"/>
    <property type="molecule type" value="Genomic_DNA"/>
</dbReference>
<dbReference type="EMBL" id="U05231">
    <property type="protein sequence ID" value="AAC51349.1"/>
    <property type="status" value="JOINED"/>
    <property type="molecule type" value="Genomic_DNA"/>
</dbReference>
<dbReference type="EMBL" id="U05232">
    <property type="protein sequence ID" value="AAC51349.1"/>
    <property type="status" value="JOINED"/>
    <property type="molecule type" value="Genomic_DNA"/>
</dbReference>
<dbReference type="EMBL" id="U05233">
    <property type="protein sequence ID" value="AAC51349.1"/>
    <property type="status" value="JOINED"/>
    <property type="molecule type" value="Genomic_DNA"/>
</dbReference>
<dbReference type="EMBL" id="U05234">
    <property type="protein sequence ID" value="AAC51349.1"/>
    <property type="status" value="JOINED"/>
    <property type="molecule type" value="Genomic_DNA"/>
</dbReference>
<dbReference type="EMBL" id="AK295687">
    <property type="protein sequence ID" value="BAH12156.1"/>
    <property type="molecule type" value="mRNA"/>
</dbReference>
<dbReference type="EMBL" id="AC007386">
    <property type="protein sequence ID" value="AAF03519.1"/>
    <property type="molecule type" value="Genomic_DNA"/>
</dbReference>
<dbReference type="EMBL" id="CH471053">
    <property type="protein sequence ID" value="EAW99932.1"/>
    <property type="molecule type" value="Genomic_DNA"/>
</dbReference>
<dbReference type="EMBL" id="CH471053">
    <property type="protein sequence ID" value="EAW99933.1"/>
    <property type="molecule type" value="Genomic_DNA"/>
</dbReference>
<dbReference type="EMBL" id="BC026216">
    <property type="protein sequence ID" value="AAH26216.1"/>
    <property type="molecule type" value="mRNA"/>
</dbReference>
<dbReference type="EMBL" id="BC072423">
    <property type="protein sequence ID" value="AAH72423.1"/>
    <property type="molecule type" value="mRNA"/>
</dbReference>
<dbReference type="CCDS" id="CCDS1879.1">
    <molecule id="P43007-1"/>
</dbReference>
<dbReference type="CCDS" id="CCDS54362.1">
    <molecule id="P43007-2"/>
</dbReference>
<dbReference type="PIR" id="I37188">
    <property type="entry name" value="I37188"/>
</dbReference>
<dbReference type="PIR" id="I55389">
    <property type="entry name" value="I55389"/>
</dbReference>
<dbReference type="RefSeq" id="NP_001180422.1">
    <molecule id="P43007-2"/>
    <property type="nucleotide sequence ID" value="NM_001193493.2"/>
</dbReference>
<dbReference type="RefSeq" id="NP_003029.2">
    <molecule id="P43007-1"/>
    <property type="nucleotide sequence ID" value="NM_003038.4"/>
</dbReference>
<dbReference type="PDB" id="7P4I">
    <property type="method" value="EM"/>
    <property type="resolution" value="4.20 A"/>
    <property type="chains" value="A/B/C=1-532"/>
</dbReference>
<dbReference type="PDBsum" id="7P4I"/>
<dbReference type="EMDB" id="EMD-13193"/>
<dbReference type="SMR" id="P43007"/>
<dbReference type="BioGRID" id="112400">
    <property type="interactions" value="27"/>
</dbReference>
<dbReference type="FunCoup" id="P43007">
    <property type="interactions" value="85"/>
</dbReference>
<dbReference type="IntAct" id="P43007">
    <property type="interactions" value="14"/>
</dbReference>
<dbReference type="MINT" id="P43007"/>
<dbReference type="STRING" id="9606.ENSP00000234256"/>
<dbReference type="ChEMBL" id="CHEMBL2315"/>
<dbReference type="DrugBank" id="DB00160">
    <property type="generic name" value="Alanine"/>
</dbReference>
<dbReference type="TCDB" id="2.A.23.3.1">
    <property type="family name" value="the dicarboxylate/amino acid:cation (na(+) or h(+)) symporter (daacs) family"/>
</dbReference>
<dbReference type="GlyCosmos" id="P43007">
    <property type="glycosylation" value="2 sites, No reported glycans"/>
</dbReference>
<dbReference type="GlyGen" id="P43007">
    <property type="glycosylation" value="3 sites, 2 N-linked glycans (2 sites), 1 O-linked glycan (1 site)"/>
</dbReference>
<dbReference type="iPTMnet" id="P43007"/>
<dbReference type="PhosphoSitePlus" id="P43007"/>
<dbReference type="SwissPalm" id="P43007"/>
<dbReference type="BioMuta" id="SLC1A4"/>
<dbReference type="DMDM" id="1173365"/>
<dbReference type="jPOST" id="P43007"/>
<dbReference type="MassIVE" id="P43007"/>
<dbReference type="PaxDb" id="9606-ENSP00000234256"/>
<dbReference type="PeptideAtlas" id="P43007"/>
<dbReference type="ProteomicsDB" id="55572">
    <molecule id="P43007-1"/>
</dbReference>
<dbReference type="ProteomicsDB" id="55573">
    <molecule id="P43007-2"/>
</dbReference>
<dbReference type="Pumba" id="P43007"/>
<dbReference type="Antibodypedia" id="30840">
    <property type="antibodies" value="251 antibodies from 33 providers"/>
</dbReference>
<dbReference type="DNASU" id="6509"/>
<dbReference type="Ensembl" id="ENST00000234256.4">
    <molecule id="P43007-1"/>
    <property type="protein sequence ID" value="ENSP00000234256.3"/>
    <property type="gene ID" value="ENSG00000115902.11"/>
</dbReference>
<dbReference type="Ensembl" id="ENST00000531327.5">
    <molecule id="P43007-2"/>
    <property type="protein sequence ID" value="ENSP00000431942.1"/>
    <property type="gene ID" value="ENSG00000115902.11"/>
</dbReference>
<dbReference type="GeneID" id="6509"/>
<dbReference type="KEGG" id="hsa:6509"/>
<dbReference type="MANE-Select" id="ENST00000234256.4">
    <property type="protein sequence ID" value="ENSP00000234256.3"/>
    <property type="RefSeq nucleotide sequence ID" value="NM_003038.5"/>
    <property type="RefSeq protein sequence ID" value="NP_003029.2"/>
</dbReference>
<dbReference type="UCSC" id="uc010ypz.3">
    <molecule id="P43007-1"/>
    <property type="organism name" value="human"/>
</dbReference>
<dbReference type="AGR" id="HGNC:10942"/>
<dbReference type="CTD" id="6509"/>
<dbReference type="DisGeNET" id="6509"/>
<dbReference type="GeneCards" id="SLC1A4"/>
<dbReference type="HGNC" id="HGNC:10942">
    <property type="gene designation" value="SLC1A4"/>
</dbReference>
<dbReference type="HPA" id="ENSG00000115902">
    <property type="expression patterns" value="Tissue enhanced (brain)"/>
</dbReference>
<dbReference type="MalaCards" id="SLC1A4"/>
<dbReference type="MIM" id="600229">
    <property type="type" value="gene"/>
</dbReference>
<dbReference type="MIM" id="616657">
    <property type="type" value="phenotype"/>
</dbReference>
<dbReference type="neXtProt" id="NX_P43007"/>
<dbReference type="OpenTargets" id="ENSG00000115902"/>
<dbReference type="Orphanet" id="447997">
    <property type="disease" value="Spastic tetraplegia-thin corpus callosum-progressive postnatal microcephaly syndrome"/>
</dbReference>
<dbReference type="PharmGKB" id="PA35829"/>
<dbReference type="VEuPathDB" id="HostDB:ENSG00000115902"/>
<dbReference type="eggNOG" id="KOG3787">
    <property type="taxonomic scope" value="Eukaryota"/>
</dbReference>
<dbReference type="GeneTree" id="ENSGT00940000157081"/>
<dbReference type="HOGENOM" id="CLU_019375_6_2_1"/>
<dbReference type="InParanoid" id="P43007"/>
<dbReference type="OMA" id="GIMFVVH"/>
<dbReference type="OrthoDB" id="5877963at2759"/>
<dbReference type="PAN-GO" id="P43007">
    <property type="GO annotations" value="7 GO annotations based on evolutionary models"/>
</dbReference>
<dbReference type="PhylomeDB" id="P43007"/>
<dbReference type="TreeFam" id="TF315206"/>
<dbReference type="PathwayCommons" id="P43007"/>
<dbReference type="Reactome" id="R-HSA-352230">
    <property type="pathway name" value="Amino acid transport across the plasma membrane"/>
</dbReference>
<dbReference type="SignaLink" id="P43007"/>
<dbReference type="BioGRID-ORCS" id="6509">
    <property type="hits" value="10 hits in 1161 CRISPR screens"/>
</dbReference>
<dbReference type="ChiTaRS" id="SLC1A4">
    <property type="organism name" value="human"/>
</dbReference>
<dbReference type="GeneWiki" id="SLC1A4"/>
<dbReference type="GenomeRNAi" id="6509"/>
<dbReference type="Pharos" id="P43007">
    <property type="development level" value="Tbio"/>
</dbReference>
<dbReference type="PRO" id="PR:P43007"/>
<dbReference type="Proteomes" id="UP000005640">
    <property type="component" value="Chromosome 2"/>
</dbReference>
<dbReference type="RNAct" id="P43007">
    <property type="molecule type" value="protein"/>
</dbReference>
<dbReference type="Bgee" id="ENSG00000115902">
    <property type="expression patterns" value="Expressed in buccal mucosa cell and 206 other cell types or tissues"/>
</dbReference>
<dbReference type="GO" id="GO:0009986">
    <property type="term" value="C:cell surface"/>
    <property type="evidence" value="ECO:0007005"/>
    <property type="project" value="UniProtKB"/>
</dbReference>
<dbReference type="GO" id="GO:0005813">
    <property type="term" value="C:centrosome"/>
    <property type="evidence" value="ECO:0000314"/>
    <property type="project" value="HPA"/>
</dbReference>
<dbReference type="GO" id="GO:0030425">
    <property type="term" value="C:dendrite"/>
    <property type="evidence" value="ECO:0007669"/>
    <property type="project" value="Ensembl"/>
</dbReference>
<dbReference type="GO" id="GO:0070062">
    <property type="term" value="C:extracellular exosome"/>
    <property type="evidence" value="ECO:0007005"/>
    <property type="project" value="UniProtKB"/>
</dbReference>
<dbReference type="GO" id="GO:0005882">
    <property type="term" value="C:intermediate filament"/>
    <property type="evidence" value="ECO:0000250"/>
    <property type="project" value="UniProtKB"/>
</dbReference>
<dbReference type="GO" id="GO:0042470">
    <property type="term" value="C:melanosome"/>
    <property type="evidence" value="ECO:0007669"/>
    <property type="project" value="UniProtKB-SubCell"/>
</dbReference>
<dbReference type="GO" id="GO:0016020">
    <property type="term" value="C:membrane"/>
    <property type="evidence" value="ECO:0000314"/>
    <property type="project" value="ARUK-UCL"/>
</dbReference>
<dbReference type="GO" id="GO:0043025">
    <property type="term" value="C:neuronal cell body"/>
    <property type="evidence" value="ECO:0007669"/>
    <property type="project" value="Ensembl"/>
</dbReference>
<dbReference type="GO" id="GO:0005886">
    <property type="term" value="C:plasma membrane"/>
    <property type="evidence" value="ECO:0000315"/>
    <property type="project" value="ARUK-UCL"/>
</dbReference>
<dbReference type="GO" id="GO:0045202">
    <property type="term" value="C:synapse"/>
    <property type="evidence" value="ECO:0007669"/>
    <property type="project" value="GOC"/>
</dbReference>
<dbReference type="GO" id="GO:0015171">
    <property type="term" value="F:amino acid transmembrane transporter activity"/>
    <property type="evidence" value="ECO:0000304"/>
    <property type="project" value="Reactome"/>
</dbReference>
<dbReference type="GO" id="GO:0005254">
    <property type="term" value="F:chloride channel activity"/>
    <property type="evidence" value="ECO:0000314"/>
    <property type="project" value="UniProtKB"/>
</dbReference>
<dbReference type="GO" id="GO:0015180">
    <property type="term" value="F:L-alanine transmembrane transporter activity"/>
    <property type="evidence" value="ECO:0000314"/>
    <property type="project" value="UniProtKB"/>
</dbReference>
<dbReference type="GO" id="GO:0015183">
    <property type="term" value="F:L-aspartate transmembrane transporter activity"/>
    <property type="evidence" value="ECO:0000250"/>
    <property type="project" value="ARUK-UCL"/>
</dbReference>
<dbReference type="GO" id="GO:0015184">
    <property type="term" value="F:L-cystine transmembrane transporter activity"/>
    <property type="evidence" value="ECO:0000314"/>
    <property type="project" value="UniProtKB"/>
</dbReference>
<dbReference type="GO" id="GO:0015186">
    <property type="term" value="F:L-glutamine transmembrane transporter activity"/>
    <property type="evidence" value="ECO:0000304"/>
    <property type="project" value="BHF-UCL"/>
</dbReference>
<dbReference type="GO" id="GO:0034590">
    <property type="term" value="F:L-hydroxyproline transmembrane transporter activity"/>
    <property type="evidence" value="ECO:0000314"/>
    <property type="project" value="UniProtKB"/>
</dbReference>
<dbReference type="GO" id="GO:0015193">
    <property type="term" value="F:L-proline transmembrane transporter activity"/>
    <property type="evidence" value="ECO:0000314"/>
    <property type="project" value="UniProtKB"/>
</dbReference>
<dbReference type="GO" id="GO:0015194">
    <property type="term" value="F:L-serine transmembrane transporter activity"/>
    <property type="evidence" value="ECO:0000314"/>
    <property type="project" value="UniProtKB"/>
</dbReference>
<dbReference type="GO" id="GO:0015195">
    <property type="term" value="F:L-threonine transmembrane transporter activity"/>
    <property type="evidence" value="ECO:0000314"/>
    <property type="project" value="UniProtKB"/>
</dbReference>
<dbReference type="GO" id="GO:0015293">
    <property type="term" value="F:symporter activity"/>
    <property type="evidence" value="ECO:0007669"/>
    <property type="project" value="UniProtKB-KW"/>
</dbReference>
<dbReference type="GO" id="GO:0006865">
    <property type="term" value="P:amino acid transport"/>
    <property type="evidence" value="ECO:0000304"/>
    <property type="project" value="Reactome"/>
</dbReference>
<dbReference type="GO" id="GO:0050890">
    <property type="term" value="P:cognition"/>
    <property type="evidence" value="ECO:0000315"/>
    <property type="project" value="UniProtKB"/>
</dbReference>
<dbReference type="GO" id="GO:0006868">
    <property type="term" value="P:glutamine transport"/>
    <property type="evidence" value="ECO:0000304"/>
    <property type="project" value="BHF-UCL"/>
</dbReference>
<dbReference type="GO" id="GO:0034589">
    <property type="term" value="P:hydroxyproline transport"/>
    <property type="evidence" value="ECO:0000314"/>
    <property type="project" value="UniProtKB"/>
</dbReference>
<dbReference type="GO" id="GO:1904273">
    <property type="term" value="P:L-alanine import across plasma membrane"/>
    <property type="evidence" value="ECO:0000315"/>
    <property type="project" value="ARUK-UCL"/>
</dbReference>
<dbReference type="GO" id="GO:0015808">
    <property type="term" value="P:L-alanine transport"/>
    <property type="evidence" value="ECO:0000314"/>
    <property type="project" value="UniProtKB"/>
</dbReference>
<dbReference type="GO" id="GO:0140009">
    <property type="term" value="P:L-aspartate import across plasma membrane"/>
    <property type="evidence" value="ECO:0000250"/>
    <property type="project" value="ARUK-UCL"/>
</dbReference>
<dbReference type="GO" id="GO:0015811">
    <property type="term" value="P:L-cystine transport"/>
    <property type="evidence" value="ECO:0000314"/>
    <property type="project" value="UniProtKB"/>
</dbReference>
<dbReference type="GO" id="GO:0015813">
    <property type="term" value="P:L-glutamate transmembrane transport"/>
    <property type="evidence" value="ECO:0000318"/>
    <property type="project" value="GO_Central"/>
</dbReference>
<dbReference type="GO" id="GO:1903812">
    <property type="term" value="P:L-serine import across plasma membrane"/>
    <property type="evidence" value="ECO:0000315"/>
    <property type="project" value="ARUK-UCL"/>
</dbReference>
<dbReference type="GO" id="GO:0015825">
    <property type="term" value="P:L-serine transport"/>
    <property type="evidence" value="ECO:0000314"/>
    <property type="project" value="UniProtKB"/>
</dbReference>
<dbReference type="GO" id="GO:0015824">
    <property type="term" value="P:proline transport"/>
    <property type="evidence" value="ECO:0000314"/>
    <property type="project" value="UniProtKB"/>
</dbReference>
<dbReference type="GO" id="GO:0035249">
    <property type="term" value="P:synaptic transmission, glutamatergic"/>
    <property type="evidence" value="ECO:0000303"/>
    <property type="project" value="UniProtKB"/>
</dbReference>
<dbReference type="GO" id="GO:0015826">
    <property type="term" value="P:threonine transport"/>
    <property type="evidence" value="ECO:0000314"/>
    <property type="project" value="UniProtKB"/>
</dbReference>
<dbReference type="GO" id="GO:0150104">
    <property type="term" value="P:transport across blood-brain barrier"/>
    <property type="evidence" value="ECO:0000303"/>
    <property type="project" value="ARUK-UCL"/>
</dbReference>
<dbReference type="FunFam" id="1.10.3860.10:FF:000005">
    <property type="entry name" value="Amino acid transporter"/>
    <property type="match status" value="1"/>
</dbReference>
<dbReference type="Gene3D" id="1.10.3860.10">
    <property type="entry name" value="Sodium:dicarboxylate symporter"/>
    <property type="match status" value="1"/>
</dbReference>
<dbReference type="InterPro" id="IPR050746">
    <property type="entry name" value="DAACS"/>
</dbReference>
<dbReference type="InterPro" id="IPR001991">
    <property type="entry name" value="Na-dicarboxylate_symporter"/>
</dbReference>
<dbReference type="InterPro" id="IPR018107">
    <property type="entry name" value="Na-dicarboxylate_symporter_CS"/>
</dbReference>
<dbReference type="InterPro" id="IPR036458">
    <property type="entry name" value="Na:dicarbo_symporter_sf"/>
</dbReference>
<dbReference type="PANTHER" id="PTHR11958:SF20">
    <property type="entry name" value="NEUTRAL AMINO ACID TRANSPORTER A"/>
    <property type="match status" value="1"/>
</dbReference>
<dbReference type="PANTHER" id="PTHR11958">
    <property type="entry name" value="SODIUM/DICARBOXYLATE SYMPORTER-RELATED"/>
    <property type="match status" value="1"/>
</dbReference>
<dbReference type="Pfam" id="PF00375">
    <property type="entry name" value="SDF"/>
    <property type="match status" value="1"/>
</dbReference>
<dbReference type="PRINTS" id="PR00173">
    <property type="entry name" value="EDTRNSPORT"/>
</dbReference>
<dbReference type="SUPFAM" id="SSF118215">
    <property type="entry name" value="Proton glutamate symport protein"/>
    <property type="match status" value="1"/>
</dbReference>
<dbReference type="PROSITE" id="PS00713">
    <property type="entry name" value="NA_DICARBOXYL_SYMP_1"/>
    <property type="match status" value="1"/>
</dbReference>
<dbReference type="PROSITE" id="PS00714">
    <property type="entry name" value="NA_DICARBOXYL_SYMP_2"/>
    <property type="match status" value="1"/>
</dbReference>
<keyword id="KW-0002">3D-structure</keyword>
<keyword id="KW-0007">Acetylation</keyword>
<keyword id="KW-0025">Alternative splicing</keyword>
<keyword id="KW-0225">Disease variant</keyword>
<keyword id="KW-0887">Epilepsy</keyword>
<keyword id="KW-0325">Glycoprotein</keyword>
<keyword id="KW-0991">Intellectual disability</keyword>
<keyword id="KW-0472">Membrane</keyword>
<keyword id="KW-0597">Phosphoprotein</keyword>
<keyword id="KW-1267">Proteomics identification</keyword>
<keyword id="KW-1185">Reference proteome</keyword>
<keyword id="KW-0769">Symport</keyword>
<keyword id="KW-0812">Transmembrane</keyword>
<keyword id="KW-1133">Transmembrane helix</keyword>
<keyword id="KW-0813">Transport</keyword>
<gene>
    <name evidence="13 17" type="primary">SLC1A4</name>
    <name evidence="13" type="synonym">ASCT1</name>
    <name evidence="15" type="synonym">SATT</name>
</gene>